<protein>
    <recommendedName>
        <fullName>Dihydrolipoyl dehydrogenase, mitochondrial</fullName>
        <ecNumber evidence="9 12 13 14 15 17">1.8.1.4</ecNumber>
    </recommendedName>
    <alternativeName>
        <fullName>Dihydrolipoamide dehydrogenase</fullName>
    </alternativeName>
    <alternativeName>
        <fullName>Glycine cleavage system L protein</fullName>
    </alternativeName>
</protein>
<feature type="transit peptide" description="Mitochondrion" evidence="31">
    <location>
        <begin position="1"/>
        <end position="35"/>
    </location>
</feature>
<feature type="chain" id="PRO_0000030295" description="Dihydrolipoyl dehydrogenase, mitochondrial">
    <location>
        <begin position="36"/>
        <end position="509"/>
    </location>
</feature>
<feature type="active site" description="Proton acceptor" evidence="2">
    <location>
        <position position="487"/>
    </location>
</feature>
<feature type="binding site" evidence="11">
    <location>
        <begin position="71"/>
        <end position="80"/>
    </location>
    <ligand>
        <name>FAD</name>
        <dbReference type="ChEBI" id="CHEBI:57692"/>
    </ligand>
</feature>
<feature type="binding site" evidence="11">
    <location>
        <position position="89"/>
    </location>
    <ligand>
        <name>FAD</name>
        <dbReference type="ChEBI" id="CHEBI:57692"/>
    </ligand>
</feature>
<feature type="binding site" evidence="11">
    <location>
        <position position="154"/>
    </location>
    <ligand>
        <name>FAD</name>
        <dbReference type="ChEBI" id="CHEBI:57692"/>
    </ligand>
</feature>
<feature type="binding site" evidence="11">
    <location>
        <begin position="183"/>
        <end position="185"/>
    </location>
    <ligand>
        <name>FAD</name>
        <dbReference type="ChEBI" id="CHEBI:57692"/>
    </ligand>
</feature>
<feature type="binding site" evidence="11">
    <location>
        <begin position="220"/>
        <end position="227"/>
    </location>
    <ligand>
        <name>NAD(+)</name>
        <dbReference type="ChEBI" id="CHEBI:57540"/>
    </ligand>
</feature>
<feature type="binding site" evidence="11">
    <location>
        <position position="243"/>
    </location>
    <ligand>
        <name>NAD(+)</name>
        <dbReference type="ChEBI" id="CHEBI:57540"/>
    </ligand>
</feature>
<feature type="binding site" evidence="11">
    <location>
        <position position="278"/>
    </location>
    <ligand>
        <name>NAD(+)</name>
        <dbReference type="ChEBI" id="CHEBI:57540"/>
    </ligand>
</feature>
<feature type="binding site" evidence="11">
    <location>
        <position position="314"/>
    </location>
    <ligand>
        <name>NAD(+)</name>
        <dbReference type="ChEBI" id="CHEBI:57540"/>
    </ligand>
</feature>
<feature type="binding site" evidence="11">
    <location>
        <position position="355"/>
    </location>
    <ligand>
        <name>FAD</name>
        <dbReference type="ChEBI" id="CHEBI:57692"/>
    </ligand>
</feature>
<feature type="binding site" evidence="11">
    <location>
        <begin position="361"/>
        <end position="364"/>
    </location>
    <ligand>
        <name>FAD</name>
        <dbReference type="ChEBI" id="CHEBI:57692"/>
    </ligand>
</feature>
<feature type="site" description="Important for interaction with PDHX and activity of multienzyme pyruvate dehydrogenase complex" evidence="17">
    <location>
        <position position="448"/>
    </location>
</feature>
<feature type="site" description="Important for interaction with PDHX and activity of multienzyme pyruvate dehydrogenase complex" evidence="17">
    <location>
        <position position="473"/>
    </location>
</feature>
<feature type="modified residue" description="N6-acetyllysine; alternate" evidence="1">
    <location>
        <position position="66"/>
    </location>
</feature>
<feature type="modified residue" description="N6-succinyllysine; alternate" evidence="1">
    <location>
        <position position="66"/>
    </location>
</feature>
<feature type="modified residue" description="N6-acetyllysine; alternate" evidence="1">
    <location>
        <position position="104"/>
    </location>
</feature>
<feature type="modified residue" description="N6-succinyllysine; alternate" evidence="1">
    <location>
        <position position="104"/>
    </location>
</feature>
<feature type="modified residue" description="N6-acetyllysine; alternate" evidence="1">
    <location>
        <position position="122"/>
    </location>
</feature>
<feature type="modified residue" description="N6-succinyllysine; alternate" evidence="1">
    <location>
        <position position="122"/>
    </location>
</feature>
<feature type="modified residue" description="N6-acetyllysine; alternate" evidence="1">
    <location>
        <position position="132"/>
    </location>
</feature>
<feature type="modified residue" description="N6-succinyllysine; alternate" evidence="1">
    <location>
        <position position="132"/>
    </location>
</feature>
<feature type="modified residue" description="N6-acetyllysine; alternate" evidence="29">
    <location>
        <position position="143"/>
    </location>
</feature>
<feature type="modified residue" description="N6-succinyllysine; alternate" evidence="1">
    <location>
        <position position="143"/>
    </location>
</feature>
<feature type="modified residue" description="N6-succinyllysine" evidence="1">
    <location>
        <position position="159"/>
    </location>
</feature>
<feature type="modified residue" description="N6-succinyllysine" evidence="1">
    <location>
        <position position="166"/>
    </location>
</feature>
<feature type="modified residue" description="N6-succinyllysine" evidence="1">
    <location>
        <position position="273"/>
    </location>
</feature>
<feature type="modified residue" description="N6-succinyllysine" evidence="1">
    <location>
        <position position="277"/>
    </location>
</feature>
<feature type="modified residue" description="Phosphoserine" evidence="1">
    <location>
        <position position="285"/>
    </location>
</feature>
<feature type="modified residue" description="Phosphoserine" evidence="3">
    <location>
        <position position="297"/>
    </location>
</feature>
<feature type="modified residue" description="N6-acetyllysine" evidence="1">
    <location>
        <position position="346"/>
    </location>
</feature>
<feature type="modified residue" description="N6-acetyllysine; alternate" evidence="29">
    <location>
        <position position="410"/>
    </location>
</feature>
<feature type="modified residue" description="N6-succinyllysine; alternate" evidence="1">
    <location>
        <position position="410"/>
    </location>
</feature>
<feature type="modified residue" description="N6-acetyllysine" evidence="29">
    <location>
        <position position="417"/>
    </location>
</feature>
<feature type="modified residue" description="N6-acetyllysine" evidence="1">
    <location>
        <position position="420"/>
    </location>
</feature>
<feature type="modified residue" description="N6-succinyllysine" evidence="1">
    <location>
        <position position="430"/>
    </location>
</feature>
<feature type="modified residue" description="Phosphoserine" evidence="30">
    <location>
        <position position="502"/>
    </location>
</feature>
<feature type="modified residue" description="N6-acetyllysine; alternate" evidence="1">
    <location>
        <position position="505"/>
    </location>
</feature>
<feature type="modified residue" description="N6-succinyllysine; alternate" evidence="1">
    <location>
        <position position="505"/>
    </location>
</feature>
<feature type="disulfide bond" description="Redox-active" evidence="2">
    <location>
        <begin position="80"/>
        <end position="85"/>
    </location>
</feature>
<feature type="splice variant" id="VSP_055855" description="In isoform 2." evidence="25">
    <location>
        <begin position="1"/>
        <end position="99"/>
    </location>
</feature>
<feature type="splice variant" id="VSP_055856" description="In isoform 3." evidence="25">
    <location>
        <begin position="147"/>
        <end position="194"/>
    </location>
</feature>
<feature type="sequence variant" id="VAR_076985" description="In DLDD; dbSNP:rs397514651." evidence="13">
    <original>I</original>
    <variation>T</variation>
    <location>
        <position position="47"/>
    </location>
</feature>
<feature type="sequence variant" id="VAR_006907" description="In DLDD; reduced dihydrolipoyl dehydrogenase activity; no effect on interaction with PDHX; dbSNP:rs121964987." evidence="15 21">
    <original>K</original>
    <variation>E</variation>
    <location>
        <position position="72"/>
    </location>
</feature>
<feature type="sequence variant" id="VAR_031922" description="In dbSNP:rs1130477." evidence="19 20">
    <original>K</original>
    <variation>T</variation>
    <location>
        <position position="104"/>
    </location>
</feature>
<feature type="sequence variant" id="VAR_076986" description="In DLDD." evidence="23">
    <location>
        <position position="136"/>
    </location>
</feature>
<feature type="sequence variant" id="VAR_015820" description="In DLDD; dbSNP:rs121964990." evidence="13 24">
    <original>G</original>
    <variation>C</variation>
    <location>
        <position position="229"/>
    </location>
</feature>
<feature type="sequence variant" id="VAR_014555" description="In dbSNP:rs17624.">
    <original>L</original>
    <variation>V</variation>
    <location>
        <position position="331"/>
    </location>
</feature>
<feature type="sequence variant" id="VAR_076987" description="In DLDD; dbSNP:rs121964993." evidence="6">
    <original>M</original>
    <variation>V</variation>
    <location>
        <position position="361"/>
    </location>
</feature>
<feature type="sequence variant" id="VAR_076988" description="In DLDD; loss of enzyme activity; abolished interaction with PDHX; dbSNP:rs121964992." evidence="6 13 15 23">
    <original>E</original>
    <variation>K</variation>
    <location>
        <position position="375"/>
    </location>
</feature>
<feature type="sequence variant" id="VAR_076989" description="In DLDD; dbSNP:rs121964991." evidence="7">
    <original>I</original>
    <variation>T</variation>
    <location>
        <position position="393"/>
    </location>
</feature>
<feature type="sequence variant" id="VAR_076990" description="In DLDD; reduced dehydrogenase activity; increased proteolytic activity; dbSNP:rs397514649." evidence="5 14">
    <original>D</original>
    <variation>V</variation>
    <location>
        <position position="479"/>
    </location>
</feature>
<feature type="sequence variant" id="VAR_076991" description="In DLDD; reduced enzyme activity; dbSNP:rs397514650." evidence="9">
    <original>R</original>
    <variation>G</variation>
    <location>
        <position position="482"/>
    </location>
</feature>
<feature type="sequence variant" id="VAR_006908" description="In DLDD; no effect on interaction with PDHX; dbSNP:rs121964988." evidence="15 21">
    <original>P</original>
    <variation>L</variation>
    <location>
        <position position="488"/>
    </location>
</feature>
<feature type="sequence variant" id="VAR_015821" description="In DLDD; loss of enzyme activity; reduced interaction with PDHX; dbSNP:rs121964989." evidence="12 15 22">
    <original>R</original>
    <variation>G</variation>
    <location>
        <position position="495"/>
    </location>
</feature>
<feature type="mutagenesis site" description="Abolishes dihydrolipoyl dehydrogenase activity. Does not affect interaction with PDHX." evidence="15">
    <original>K</original>
    <variation>E</variation>
    <location>
        <position position="89"/>
    </location>
</feature>
<feature type="mutagenesis site" description="Reduces dihydrolipoyl dehydrogenase activity." evidence="17">
    <original>H</original>
    <variation>A</variation>
    <location>
        <position position="383"/>
    </location>
</feature>
<feature type="mutagenesis site" description="Reduces dihydrolipoyl dehydrogenase activity." evidence="17">
    <original>H</original>
    <variation>L</variation>
    <location>
        <position position="383"/>
    </location>
</feature>
<feature type="mutagenesis site" description="Reduces interaction with PDHX. Inhibits multienzyme pyruvate dehydrogenase complex activity. Does not affect dihydrolipoyl dehydrogenase activity." evidence="17">
    <original>D</original>
    <variation>A</variation>
    <location>
        <position position="448"/>
    </location>
</feature>
<feature type="mutagenesis site" description="Does not affect dihydrolipoyl dehydrogenase activity." evidence="17">
    <original>D</original>
    <variation>N</variation>
    <location>
        <position position="448"/>
    </location>
</feature>
<feature type="mutagenesis site" description="Decreases dehydrogenase activity. Loss of proteolytic activity." evidence="14">
    <original>E</original>
    <variation>A</variation>
    <location>
        <position position="466"/>
    </location>
</feature>
<feature type="mutagenesis site" description="Reduces interaction with PDHX. Inhibits multienzyme pyruvate dehydrogenase complex activity. Does not affect dihydrolipoyl dehydrogenase activity." evidence="17">
    <original>Y</original>
    <variation>A</variation>
    <location>
        <position position="473"/>
    </location>
</feature>
<feature type="mutagenesis site" description="Does not affect dihydrolipoyl dehydrogenase activity." evidence="17">
    <original>Y</original>
    <variation>F</variation>
    <location>
        <position position="473"/>
    </location>
</feature>
<feature type="mutagenesis site" description="Reduces interaction with PDHX. Inhibits multienzyme pyruvate dehydrogenase complex activity. Does not affect dihydrolipoyl dehydrogenase activity." evidence="17">
    <original>Y</original>
    <variation>H</variation>
    <location>
        <position position="473"/>
    </location>
</feature>
<feature type="mutagenesis site" description="Does not affect dihydrolipoyl dehydrogenase activity." evidence="17">
    <original>R</original>
    <variation>A</variation>
    <location>
        <position position="482"/>
    </location>
</feature>
<feature type="mutagenesis site" description="Does not affect interaction with PDHX." evidence="15">
    <original>R</original>
    <variation>M</variation>
    <location>
        <position position="482"/>
    </location>
</feature>
<feature type="mutagenesis site" description="Loss of dehydrogenase activity. Increases proteolytic activity." evidence="14">
    <original>H</original>
    <variation>A</variation>
    <location>
        <position position="485"/>
    </location>
</feature>
<feature type="mutagenesis site" description="Loss of proteolytic activity. Does not affect dehydrogenase activity." evidence="14">
    <original>S</original>
    <variation>A</variation>
    <location>
        <position position="491"/>
    </location>
</feature>
<feature type="mutagenesis site" description="Reduces dihydrolipoyl dehydrogenase activity. Does not affect interaction with PDHX." evidence="15">
    <original>E</original>
    <variation>Q</variation>
    <location>
        <position position="492"/>
    </location>
</feature>
<feature type="mutagenesis site" description="Reduces dihydrolipoyl dehydrogenase activity. Does not affect interaction with PDHX." evidence="15">
    <original>K</original>
    <variation>M</variation>
    <location>
        <position position="505"/>
    </location>
</feature>
<feature type="sequence conflict" description="In Ref. 2; AAA35764." evidence="26" ref="2">
    <original>G</original>
    <variation>R</variation>
    <location>
        <position position="154"/>
    </location>
</feature>
<feature type="sequence conflict" description="In Ref. 5; BAD92940." evidence="26" ref="5">
    <original>L</original>
    <variation>F</variation>
    <location>
        <position position="209"/>
    </location>
</feature>
<feature type="sequence conflict" description="In Ref. 3; AAB01381." evidence="26" ref="3">
    <original>A</original>
    <variation>AEA</variation>
    <location>
        <position position="493"/>
    </location>
</feature>
<feature type="strand" evidence="32">
    <location>
        <begin position="40"/>
        <end position="47"/>
    </location>
</feature>
<feature type="helix" evidence="32">
    <location>
        <begin position="51"/>
        <end position="62"/>
    </location>
</feature>
<feature type="strand" evidence="32">
    <location>
        <begin position="67"/>
        <end position="71"/>
    </location>
</feature>
<feature type="strand" evidence="32">
    <location>
        <begin position="73"/>
        <end position="77"/>
    </location>
</feature>
<feature type="helix" evidence="32">
    <location>
        <begin position="78"/>
        <end position="83"/>
    </location>
</feature>
<feature type="helix" evidence="32">
    <location>
        <begin position="85"/>
        <end position="102"/>
    </location>
</feature>
<feature type="helix" evidence="32">
    <location>
        <begin position="105"/>
        <end position="108"/>
    </location>
</feature>
<feature type="strand" evidence="32">
    <location>
        <begin position="111"/>
        <end position="114"/>
    </location>
</feature>
<feature type="strand" evidence="32">
    <location>
        <begin position="116"/>
        <end position="118"/>
    </location>
</feature>
<feature type="helix" evidence="32">
    <location>
        <begin position="120"/>
        <end position="144"/>
    </location>
</feature>
<feature type="strand" evidence="32">
    <location>
        <begin position="148"/>
        <end position="158"/>
    </location>
</feature>
<feature type="strand" evidence="32">
    <location>
        <begin position="161"/>
        <end position="165"/>
    </location>
</feature>
<feature type="strand" evidence="32">
    <location>
        <begin position="171"/>
        <end position="181"/>
    </location>
</feature>
<feature type="strand" evidence="32">
    <location>
        <begin position="185"/>
        <end position="187"/>
    </location>
</feature>
<feature type="strand" evidence="32">
    <location>
        <begin position="197"/>
        <end position="201"/>
    </location>
</feature>
<feature type="helix" evidence="32">
    <location>
        <begin position="203"/>
        <end position="206"/>
    </location>
</feature>
<feature type="strand" evidence="32">
    <location>
        <begin position="214"/>
        <end position="219"/>
    </location>
</feature>
<feature type="helix" evidence="32">
    <location>
        <begin position="223"/>
        <end position="235"/>
    </location>
</feature>
<feature type="strand" evidence="32">
    <location>
        <begin position="238"/>
        <end position="242"/>
    </location>
</feature>
<feature type="strand" evidence="32">
    <location>
        <begin position="244"/>
        <end position="249"/>
    </location>
</feature>
<feature type="helix" evidence="32">
    <location>
        <begin position="255"/>
        <end position="268"/>
    </location>
</feature>
<feature type="strand" evidence="32">
    <location>
        <begin position="271"/>
        <end position="273"/>
    </location>
</feature>
<feature type="strand" evidence="32">
    <location>
        <begin position="275"/>
        <end position="283"/>
    </location>
</feature>
<feature type="strand" evidence="32">
    <location>
        <begin position="289"/>
        <end position="295"/>
    </location>
</feature>
<feature type="strand" evidence="32">
    <location>
        <begin position="302"/>
        <end position="311"/>
    </location>
</feature>
<feature type="strand" evidence="32">
    <location>
        <begin position="315"/>
        <end position="317"/>
    </location>
</feature>
<feature type="helix" evidence="32">
    <location>
        <begin position="324"/>
        <end position="327"/>
    </location>
</feature>
<feature type="strand" evidence="32">
    <location>
        <begin position="350"/>
        <end position="352"/>
    </location>
</feature>
<feature type="helix" evidence="32">
    <location>
        <begin position="354"/>
        <end position="356"/>
    </location>
</feature>
<feature type="strand" evidence="32">
    <location>
        <begin position="357"/>
        <end position="359"/>
    </location>
</feature>
<feature type="helix" evidence="32">
    <location>
        <begin position="363"/>
        <end position="377"/>
    </location>
</feature>
<feature type="helix" evidence="32">
    <location>
        <begin position="386"/>
        <end position="388"/>
    </location>
</feature>
<feature type="strand" evidence="32">
    <location>
        <begin position="391"/>
        <end position="393"/>
    </location>
</feature>
<feature type="strand" evidence="32">
    <location>
        <begin position="395"/>
        <end position="403"/>
    </location>
</feature>
<feature type="helix" evidence="32">
    <location>
        <begin position="406"/>
        <end position="412"/>
    </location>
</feature>
<feature type="strand" evidence="32">
    <location>
        <begin position="416"/>
        <end position="422"/>
    </location>
</feature>
<feature type="helix" evidence="32">
    <location>
        <begin position="423"/>
        <end position="425"/>
    </location>
</feature>
<feature type="helix" evidence="32">
    <location>
        <begin position="427"/>
        <end position="432"/>
    </location>
</feature>
<feature type="strand" evidence="32">
    <location>
        <begin position="438"/>
        <end position="444"/>
    </location>
</feature>
<feature type="turn" evidence="32">
    <location>
        <begin position="445"/>
        <end position="447"/>
    </location>
</feature>
<feature type="strand" evidence="32">
    <location>
        <begin position="449"/>
        <end position="457"/>
    </location>
</feature>
<feature type="helix" evidence="32">
    <location>
        <begin position="460"/>
        <end position="473"/>
    </location>
</feature>
<feature type="helix" evidence="32">
    <location>
        <begin position="477"/>
        <end position="482"/>
    </location>
</feature>
<feature type="helix" evidence="32">
    <location>
        <begin position="491"/>
        <end position="503"/>
    </location>
</feature>
<evidence type="ECO:0000250" key="1">
    <source>
        <dbReference type="UniProtKB" id="O08749"/>
    </source>
</evidence>
<evidence type="ECO:0000250" key="2">
    <source>
        <dbReference type="UniProtKB" id="P09624"/>
    </source>
</evidence>
<evidence type="ECO:0000250" key="3">
    <source>
        <dbReference type="UniProtKB" id="Q6P6R2"/>
    </source>
</evidence>
<evidence type="ECO:0000250" key="4">
    <source>
        <dbReference type="UniProtKB" id="Q811C4"/>
    </source>
</evidence>
<evidence type="ECO:0000269" key="5">
    <source>
    </source>
</evidence>
<evidence type="ECO:0000269" key="6">
    <source>
    </source>
</evidence>
<evidence type="ECO:0000269" key="7">
    <source>
    </source>
</evidence>
<evidence type="ECO:0000269" key="8">
    <source>
    </source>
</evidence>
<evidence type="ECO:0000269" key="9">
    <source>
    </source>
</evidence>
<evidence type="ECO:0000269" key="10">
    <source>
    </source>
</evidence>
<evidence type="ECO:0000269" key="11">
    <source>
    </source>
</evidence>
<evidence type="ECO:0000269" key="12">
    <source>
    </source>
</evidence>
<evidence type="ECO:0000269" key="13">
    <source>
    </source>
</evidence>
<evidence type="ECO:0000269" key="14">
    <source>
    </source>
</evidence>
<evidence type="ECO:0000269" key="15">
    <source>
    </source>
</evidence>
<evidence type="ECO:0000269" key="16">
    <source>
    </source>
</evidence>
<evidence type="ECO:0000269" key="17">
    <source>
    </source>
</evidence>
<evidence type="ECO:0000269" key="18">
    <source>
    </source>
</evidence>
<evidence type="ECO:0000269" key="19">
    <source>
    </source>
</evidence>
<evidence type="ECO:0000269" key="20">
    <source>
    </source>
</evidence>
<evidence type="ECO:0000269" key="21">
    <source>
    </source>
</evidence>
<evidence type="ECO:0000269" key="22">
    <source>
    </source>
</evidence>
<evidence type="ECO:0000269" key="23">
    <source>
    </source>
</evidence>
<evidence type="ECO:0000269" key="24">
    <source>
    </source>
</evidence>
<evidence type="ECO:0000303" key="25">
    <source>
    </source>
</evidence>
<evidence type="ECO:0000305" key="26"/>
<evidence type="ECO:0000305" key="27">
    <source>
    </source>
</evidence>
<evidence type="ECO:0000305" key="28">
    <source>
    </source>
</evidence>
<evidence type="ECO:0007744" key="29">
    <source>
    </source>
</evidence>
<evidence type="ECO:0007744" key="30">
    <source>
    </source>
</evidence>
<evidence type="ECO:0007744" key="31">
    <source>
    </source>
</evidence>
<evidence type="ECO:0007829" key="32">
    <source>
        <dbReference type="PDB" id="6I4R"/>
    </source>
</evidence>
<proteinExistence type="evidence at protein level"/>
<organism>
    <name type="scientific">Homo sapiens</name>
    <name type="common">Human</name>
    <dbReference type="NCBI Taxonomy" id="9606"/>
    <lineage>
        <taxon>Eukaryota</taxon>
        <taxon>Metazoa</taxon>
        <taxon>Chordata</taxon>
        <taxon>Craniata</taxon>
        <taxon>Vertebrata</taxon>
        <taxon>Euteleostomi</taxon>
        <taxon>Mammalia</taxon>
        <taxon>Eutheria</taxon>
        <taxon>Euarchontoglires</taxon>
        <taxon>Primates</taxon>
        <taxon>Haplorrhini</taxon>
        <taxon>Catarrhini</taxon>
        <taxon>Hominidae</taxon>
        <taxon>Homo</taxon>
    </lineage>
</organism>
<accession>P09622</accession>
<accession>B2R5X0</accession>
<accession>B4DHG0</accession>
<accession>B4DT69</accession>
<accession>Q14131</accession>
<accession>Q14167</accession>
<accession>Q59EV8</accession>
<accession>Q8WTS4</accession>
<gene>
    <name type="primary">DLD</name>
    <name type="synonym">GCSL</name>
    <name type="synonym">LAD</name>
    <name type="synonym">PHE3</name>
</gene>
<comment type="function">
    <text evidence="4 9 12 13 14 15 17 18">Lipoamide dehydrogenase is a component of the glycine cleavage system as well as an E3 component of three alpha-ketoacid dehydrogenase complexes (pyruvate-, alpha-ketoglutarate-, and branched-chain amino acid-dehydrogenase complex) (PubMed:15712224, PubMed:16442803, PubMed:16770810, PubMed:17404228, PubMed:20160912, PubMed:20385101). The 2-oxoglutarate dehydrogenase complex is mainly active in the mitochondrion (PubMed:29211711). A fraction of the 2-oxoglutarate dehydrogenase complex also localizes in the nucleus and is required for lysine succinylation of histones: associates with KAT2A on chromatin and provides succinyl-CoA to histone succinyltransferase KAT2A (PubMed:29211711). In monomeric form may have additional moonlighting function as serine protease (PubMed:17404228). Involved in the hyperactivation of spermatazoa during capacitation and in the spermatazoal acrosome reaction (By similarity).</text>
</comment>
<comment type="catalytic activity">
    <reaction evidence="9 12 13 14 15 17">
        <text>N(6)-[(R)-dihydrolipoyl]-L-lysyl-[protein] + NAD(+) = N(6)-[(R)-lipoyl]-L-lysyl-[protein] + NADH + H(+)</text>
        <dbReference type="Rhea" id="RHEA:15045"/>
        <dbReference type="Rhea" id="RHEA-COMP:10474"/>
        <dbReference type="Rhea" id="RHEA-COMP:10475"/>
        <dbReference type="ChEBI" id="CHEBI:15378"/>
        <dbReference type="ChEBI" id="CHEBI:57540"/>
        <dbReference type="ChEBI" id="CHEBI:57945"/>
        <dbReference type="ChEBI" id="CHEBI:83099"/>
        <dbReference type="ChEBI" id="CHEBI:83100"/>
        <dbReference type="EC" id="1.8.1.4"/>
    </reaction>
</comment>
<comment type="cofactor">
    <cofactor evidence="11 12">
        <name>FAD</name>
        <dbReference type="ChEBI" id="CHEBI:57692"/>
    </cofactor>
    <text evidence="11 12">Binds 1 FAD per subunit.</text>
</comment>
<comment type="activity regulation">
    <text evidence="14">Disruption of native heterodimer state inhibits primary dihydrolipoamide dehydrogenase activity and induces serine protease activity.</text>
</comment>
<comment type="subunit">
    <text evidence="1 8 11 12 15 16 17 18">Homodimer (PubMed:15946682). Part of the multimeric pyruvate dehydrogenase complex that contains multiple copies of pyruvate dehydrogenase (subunits PDHA (PDHA1 or PDHA2) and PDHB, E1), dihydrolipoamide acetyltransferase (DLAT, E2) and lipoamide dehydrogenase (DLD, E3) (PubMed:14638692). These subunits are bound to an inner core composed of about 48 DLAT and 12 PDHX molecules (by non covalent bonds) (PubMed:14638692, PubMed:20361979). The 2-oxoglutarate dehydrogenase complex is composed of OGDH (2-oxoglutarate dehydrogenase; E1), DLST (dihydrolipoamide succinyltransferase; E2), DLD (dihydrolipoamide dehydrogenase; E3) and the assembly factor KGD4 (By similarity). It contains multiple copies of the three enzymatic components (E1, E2 and E3). In the nucleus, the 2-oxoglutarate dehydrogenase complex associates with KAT2A (PubMed:29211711). Interacts with PDHX (PubMed:16442803, PubMed:20160912, PubMed:20361979, PubMed:20385101).</text>
</comment>
<comment type="interaction">
    <interactant intactId="EBI-353366">
        <id>P09622</id>
    </interactant>
    <interactant intactId="EBI-466029">
        <id>P42858</id>
        <label>HTT</label>
    </interactant>
    <organismsDiffer>false</organismsDiffer>
    <experiments>3</experiments>
</comment>
<comment type="interaction">
    <interactant intactId="EBI-353366">
        <id>P09622</id>
    </interactant>
    <interactant intactId="EBI-2127319">
        <id>O14713</id>
        <label>ITGB1BP1</label>
    </interactant>
    <organismsDiffer>false</organismsDiffer>
    <experiments>3</experiments>
</comment>
<comment type="interaction">
    <interactant intactId="EBI-353366">
        <id>P09622</id>
    </interactant>
    <interactant intactId="EBI-751566">
        <id>O00330</id>
        <label>PDHX</label>
    </interactant>
    <organismsDiffer>false</organismsDiffer>
    <experiments>8</experiments>
</comment>
<comment type="interaction">
    <interactant intactId="EBI-353366">
        <id>P09622</id>
    </interactant>
    <interactant intactId="EBI-2255129">
        <id>P30041</id>
        <label>PRDX6</label>
    </interactant>
    <organismsDiffer>false</organismsDiffer>
    <experiments>3</experiments>
</comment>
<comment type="interaction">
    <interactant intactId="EBI-353366">
        <id>P09622</id>
    </interactant>
    <interactant intactId="EBI-356498">
        <id>P62258</id>
        <label>YWHAE</label>
    </interactant>
    <organismsDiffer>false</organismsDiffer>
    <experiments>5</experiments>
</comment>
<comment type="subcellular location">
    <subcellularLocation>
        <location evidence="27 28">Mitochondrion matrix</location>
    </subcellularLocation>
    <subcellularLocation>
        <location evidence="18">Nucleus</location>
    </subcellularLocation>
    <subcellularLocation>
        <location evidence="4">Cell projection</location>
        <location evidence="4">Cilium</location>
        <location evidence="4">Flagellum</location>
    </subcellularLocation>
    <subcellularLocation>
        <location evidence="10">Cytoplasmic vesicle</location>
        <location evidence="10">Secretory vesicle</location>
        <location evidence="10">Acrosome</location>
    </subcellularLocation>
    <text evidence="18">Mainly localizes in the mitochondrion. A small fraction localizes to the nucleus, where the 2-oxoglutarate dehydrogenase complex is required for histone succinylation.</text>
</comment>
<comment type="alternative products">
    <event type="alternative splicing"/>
    <isoform>
        <id>P09622-1</id>
        <name>1</name>
        <sequence type="displayed"/>
    </isoform>
    <isoform>
        <id>P09622-2</id>
        <name>2</name>
        <sequence type="described" ref="VSP_055855"/>
    </isoform>
    <isoform>
        <id>P09622-3</id>
        <name>3</name>
        <sequence type="described" ref="VSP_055856"/>
    </isoform>
</comment>
<comment type="PTM">
    <text evidence="4">Tyrosine phosphorylated.</text>
</comment>
<comment type="disease" evidence="5 6 7 9 12 13 14 15 21 22 23 24">
    <disease id="DI-03698">
        <name>Dihydrolipoamide dehydrogenase deficiency</name>
        <acronym>DLDD</acronym>
        <description>An autosomal recessive metabolic disorder characterized biochemically by a combined deficiency of the branched-chain alpha-keto acid dehydrogenase complex (BCKDC), pyruvate dehydrogenase complex (PDC), and alpha-ketoglutarate dehydrogenase complex (KGDC). Clinically, affected individuals have lactic acidosis and neurologic deterioration due to sensitivity of the central nervous system to defects in oxidative metabolism.</description>
        <dbReference type="MIM" id="246900"/>
    </disease>
    <text>The disease is caused by variants affecting the gene represented in this entry.</text>
</comment>
<comment type="miscellaneous">
    <text evidence="2">The active site is a redox-active disulfide bond.</text>
</comment>
<comment type="similarity">
    <text evidence="26">Belongs to the class-I pyridine nucleotide-disulfide oxidoreductase family.</text>
</comment>
<comment type="sequence caution" evidence="26">
    <conflict type="erroneous initiation">
        <sequence resource="EMBL-CDS" id="BAD92940"/>
    </conflict>
    <text>Extended N-terminus.</text>
</comment>
<reference key="1">
    <citation type="journal article" date="1987" name="J. Biol. Chem.">
        <title>Isolation and sequence determination of cDNA clones for porcine and human lipoamide dehydrogenase. Homology to other disulfide oxidoreductases.</title>
        <authorList>
            <person name="Otulakowski G."/>
            <person name="Robinson B.H."/>
        </authorList>
    </citation>
    <scope>NUCLEOTIDE SEQUENCE [MRNA] (ISOFORM 1)</scope>
    <scope>VARIANT THR-104</scope>
</reference>
<reference key="2">
    <citation type="journal article" date="1988" name="Proc. Natl. Acad. Sci. U.S.A.">
        <title>Cloning and cDNA sequence of the dihydrolipoamide dehydrogenase component human alpha-ketoacid dehydrogenase complexes.</title>
        <authorList>
            <person name="Pons G."/>
            <person name="Raefsky-Estrin C."/>
            <person name="Carothers D.J."/>
            <person name="Pepin R.A."/>
            <person name="Javed A.A."/>
            <person name="Jesse B.W."/>
            <person name="Ganapathi M.K."/>
            <person name="Samols D."/>
            <person name="Patel M.S."/>
        </authorList>
    </citation>
    <scope>NUCLEOTIDE SEQUENCE [MRNA] (ISOFORM 1)</scope>
</reference>
<reference key="3">
    <citation type="journal article" date="1993" name="Genomics">
        <title>The structure of the human dihydrolipoamide dehydrogenase gene (DLD) and its upstream elements.</title>
        <authorList>
            <person name="Feigenbaum A.S."/>
            <person name="Robinson B.H."/>
        </authorList>
    </citation>
    <scope>NUCLEOTIDE SEQUENCE [GENOMIC DNA]</scope>
    <scope>VARIANT THR-104</scope>
    <source>
        <tissue>Liver</tissue>
    </source>
</reference>
<reference key="4">
    <citation type="journal article" date="2004" name="Nat. Genet.">
        <title>Complete sequencing and characterization of 21,243 full-length human cDNAs.</title>
        <authorList>
            <person name="Ota T."/>
            <person name="Suzuki Y."/>
            <person name="Nishikawa T."/>
            <person name="Otsuki T."/>
            <person name="Sugiyama T."/>
            <person name="Irie R."/>
            <person name="Wakamatsu A."/>
            <person name="Hayashi K."/>
            <person name="Sato H."/>
            <person name="Nagai K."/>
            <person name="Kimura K."/>
            <person name="Makita H."/>
            <person name="Sekine M."/>
            <person name="Obayashi M."/>
            <person name="Nishi T."/>
            <person name="Shibahara T."/>
            <person name="Tanaka T."/>
            <person name="Ishii S."/>
            <person name="Yamamoto J."/>
            <person name="Saito K."/>
            <person name="Kawai Y."/>
            <person name="Isono Y."/>
            <person name="Nakamura Y."/>
            <person name="Nagahari K."/>
            <person name="Murakami K."/>
            <person name="Yasuda T."/>
            <person name="Iwayanagi T."/>
            <person name="Wagatsuma M."/>
            <person name="Shiratori A."/>
            <person name="Sudo H."/>
            <person name="Hosoiri T."/>
            <person name="Kaku Y."/>
            <person name="Kodaira H."/>
            <person name="Kondo H."/>
            <person name="Sugawara M."/>
            <person name="Takahashi M."/>
            <person name="Kanda K."/>
            <person name="Yokoi T."/>
            <person name="Furuya T."/>
            <person name="Kikkawa E."/>
            <person name="Omura Y."/>
            <person name="Abe K."/>
            <person name="Kamihara K."/>
            <person name="Katsuta N."/>
            <person name="Sato K."/>
            <person name="Tanikawa M."/>
            <person name="Yamazaki M."/>
            <person name="Ninomiya K."/>
            <person name="Ishibashi T."/>
            <person name="Yamashita H."/>
            <person name="Murakawa K."/>
            <person name="Fujimori K."/>
            <person name="Tanai H."/>
            <person name="Kimata M."/>
            <person name="Watanabe M."/>
            <person name="Hiraoka S."/>
            <person name="Chiba Y."/>
            <person name="Ishida S."/>
            <person name="Ono Y."/>
            <person name="Takiguchi S."/>
            <person name="Watanabe S."/>
            <person name="Yosida M."/>
            <person name="Hotuta T."/>
            <person name="Kusano J."/>
            <person name="Kanehori K."/>
            <person name="Takahashi-Fujii A."/>
            <person name="Hara H."/>
            <person name="Tanase T.-O."/>
            <person name="Nomura Y."/>
            <person name="Togiya S."/>
            <person name="Komai F."/>
            <person name="Hara R."/>
            <person name="Takeuchi K."/>
            <person name="Arita M."/>
            <person name="Imose N."/>
            <person name="Musashino K."/>
            <person name="Yuuki H."/>
            <person name="Oshima A."/>
            <person name="Sasaki N."/>
            <person name="Aotsuka S."/>
            <person name="Yoshikawa Y."/>
            <person name="Matsunawa H."/>
            <person name="Ichihara T."/>
            <person name="Shiohata N."/>
            <person name="Sano S."/>
            <person name="Moriya S."/>
            <person name="Momiyama H."/>
            <person name="Satoh N."/>
            <person name="Takami S."/>
            <person name="Terashima Y."/>
            <person name="Suzuki O."/>
            <person name="Nakagawa S."/>
            <person name="Senoh A."/>
            <person name="Mizoguchi H."/>
            <person name="Goto Y."/>
            <person name="Shimizu F."/>
            <person name="Wakebe H."/>
            <person name="Hishigaki H."/>
            <person name="Watanabe T."/>
            <person name="Sugiyama A."/>
            <person name="Takemoto M."/>
            <person name="Kawakami B."/>
            <person name="Yamazaki M."/>
            <person name="Watanabe K."/>
            <person name="Kumagai A."/>
            <person name="Itakura S."/>
            <person name="Fukuzumi Y."/>
            <person name="Fujimori Y."/>
            <person name="Komiyama M."/>
            <person name="Tashiro H."/>
            <person name="Tanigami A."/>
            <person name="Fujiwara T."/>
            <person name="Ono T."/>
            <person name="Yamada K."/>
            <person name="Fujii Y."/>
            <person name="Ozaki K."/>
            <person name="Hirao M."/>
            <person name="Ohmori Y."/>
            <person name="Kawabata A."/>
            <person name="Hikiji T."/>
            <person name="Kobatake N."/>
            <person name="Inagaki H."/>
            <person name="Ikema Y."/>
            <person name="Okamoto S."/>
            <person name="Okitani R."/>
            <person name="Kawakami T."/>
            <person name="Noguchi S."/>
            <person name="Itoh T."/>
            <person name="Shigeta K."/>
            <person name="Senba T."/>
            <person name="Matsumura K."/>
            <person name="Nakajima Y."/>
            <person name="Mizuno T."/>
            <person name="Morinaga M."/>
            <person name="Sasaki M."/>
            <person name="Togashi T."/>
            <person name="Oyama M."/>
            <person name="Hata H."/>
            <person name="Watanabe M."/>
            <person name="Komatsu T."/>
            <person name="Mizushima-Sugano J."/>
            <person name="Satoh T."/>
            <person name="Shirai Y."/>
            <person name="Takahashi Y."/>
            <person name="Nakagawa K."/>
            <person name="Okumura K."/>
            <person name="Nagase T."/>
            <person name="Nomura N."/>
            <person name="Kikuchi H."/>
            <person name="Masuho Y."/>
            <person name="Yamashita R."/>
            <person name="Nakai K."/>
            <person name="Yada T."/>
            <person name="Nakamura Y."/>
            <person name="Ohara O."/>
            <person name="Isogai T."/>
            <person name="Sugano S."/>
        </authorList>
    </citation>
    <scope>NUCLEOTIDE SEQUENCE [LARGE SCALE MRNA] (ISOFORMS 1; 2 AND 3)</scope>
    <source>
        <tissue>Brain</tissue>
        <tissue>Brain cortex</tissue>
        <tissue>Pericardium</tissue>
    </source>
</reference>
<reference key="5">
    <citation type="submission" date="2005-03" db="EMBL/GenBank/DDBJ databases">
        <authorList>
            <person name="Totoki Y."/>
            <person name="Toyoda A."/>
            <person name="Takeda T."/>
            <person name="Sakaki Y."/>
            <person name="Tanaka A."/>
            <person name="Yokoyama S."/>
            <person name="Ohara O."/>
            <person name="Nagase T."/>
            <person name="Kikuno R.F."/>
        </authorList>
    </citation>
    <scope>NUCLEOTIDE SEQUENCE [LARGE SCALE MRNA] (ISOFORM 1)</scope>
    <source>
        <tissue>Brain</tissue>
    </source>
</reference>
<reference key="6">
    <citation type="journal article" date="2003" name="Nature">
        <title>The DNA sequence of human chromosome 7.</title>
        <authorList>
            <person name="Hillier L.W."/>
            <person name="Fulton R.S."/>
            <person name="Fulton L.A."/>
            <person name="Graves T.A."/>
            <person name="Pepin K.H."/>
            <person name="Wagner-McPherson C."/>
            <person name="Layman D."/>
            <person name="Maas J."/>
            <person name="Jaeger S."/>
            <person name="Walker R."/>
            <person name="Wylie K."/>
            <person name="Sekhon M."/>
            <person name="Becker M.C."/>
            <person name="O'Laughlin M.D."/>
            <person name="Schaller M.E."/>
            <person name="Fewell G.A."/>
            <person name="Delehaunty K.D."/>
            <person name="Miner T.L."/>
            <person name="Nash W.E."/>
            <person name="Cordes M."/>
            <person name="Du H."/>
            <person name="Sun H."/>
            <person name="Edwards J."/>
            <person name="Bradshaw-Cordum H."/>
            <person name="Ali J."/>
            <person name="Andrews S."/>
            <person name="Isak A."/>
            <person name="Vanbrunt A."/>
            <person name="Nguyen C."/>
            <person name="Du F."/>
            <person name="Lamar B."/>
            <person name="Courtney L."/>
            <person name="Kalicki J."/>
            <person name="Ozersky P."/>
            <person name="Bielicki L."/>
            <person name="Scott K."/>
            <person name="Holmes A."/>
            <person name="Harkins R."/>
            <person name="Harris A."/>
            <person name="Strong C.M."/>
            <person name="Hou S."/>
            <person name="Tomlinson C."/>
            <person name="Dauphin-Kohlberg S."/>
            <person name="Kozlowicz-Reilly A."/>
            <person name="Leonard S."/>
            <person name="Rohlfing T."/>
            <person name="Rock S.M."/>
            <person name="Tin-Wollam A.-M."/>
            <person name="Abbott A."/>
            <person name="Minx P."/>
            <person name="Maupin R."/>
            <person name="Strowmatt C."/>
            <person name="Latreille P."/>
            <person name="Miller N."/>
            <person name="Johnson D."/>
            <person name="Murray J."/>
            <person name="Woessner J.P."/>
            <person name="Wendl M.C."/>
            <person name="Yang S.-P."/>
            <person name="Schultz B.R."/>
            <person name="Wallis J.W."/>
            <person name="Spieth J."/>
            <person name="Bieri T.A."/>
            <person name="Nelson J.O."/>
            <person name="Berkowicz N."/>
            <person name="Wohldmann P.E."/>
            <person name="Cook L.L."/>
            <person name="Hickenbotham M.T."/>
            <person name="Eldred J."/>
            <person name="Williams D."/>
            <person name="Bedell J.A."/>
            <person name="Mardis E.R."/>
            <person name="Clifton S.W."/>
            <person name="Chissoe S.L."/>
            <person name="Marra M.A."/>
            <person name="Raymond C."/>
            <person name="Haugen E."/>
            <person name="Gillett W."/>
            <person name="Zhou Y."/>
            <person name="James R."/>
            <person name="Phelps K."/>
            <person name="Iadanoto S."/>
            <person name="Bubb K."/>
            <person name="Simms E."/>
            <person name="Levy R."/>
            <person name="Clendenning J."/>
            <person name="Kaul R."/>
            <person name="Kent W.J."/>
            <person name="Furey T.S."/>
            <person name="Baertsch R.A."/>
            <person name="Brent M.R."/>
            <person name="Keibler E."/>
            <person name="Flicek P."/>
            <person name="Bork P."/>
            <person name="Suyama M."/>
            <person name="Bailey J.A."/>
            <person name="Portnoy M.E."/>
            <person name="Torrents D."/>
            <person name="Chinwalla A.T."/>
            <person name="Gish W.R."/>
            <person name="Eddy S.R."/>
            <person name="McPherson J.D."/>
            <person name="Olson M.V."/>
            <person name="Eichler E.E."/>
            <person name="Green E.D."/>
            <person name="Waterston R.H."/>
            <person name="Wilson R.K."/>
        </authorList>
    </citation>
    <scope>NUCLEOTIDE SEQUENCE [LARGE SCALE GENOMIC DNA]</scope>
</reference>
<reference key="7">
    <citation type="journal article" date="2003" name="Science">
        <title>Human chromosome 7: DNA sequence and biology.</title>
        <authorList>
            <person name="Scherer S.W."/>
            <person name="Cheung J."/>
            <person name="MacDonald J.R."/>
            <person name="Osborne L.R."/>
            <person name="Nakabayashi K."/>
            <person name="Herbrick J.-A."/>
            <person name="Carson A.R."/>
            <person name="Parker-Katiraee L."/>
            <person name="Skaug J."/>
            <person name="Khaja R."/>
            <person name="Zhang J."/>
            <person name="Hudek A.K."/>
            <person name="Li M."/>
            <person name="Haddad M."/>
            <person name="Duggan G.E."/>
            <person name="Fernandez B.A."/>
            <person name="Kanematsu E."/>
            <person name="Gentles S."/>
            <person name="Christopoulos C.C."/>
            <person name="Choufani S."/>
            <person name="Kwasnicka D."/>
            <person name="Zheng X.H."/>
            <person name="Lai Z."/>
            <person name="Nusskern D.R."/>
            <person name="Zhang Q."/>
            <person name="Gu Z."/>
            <person name="Lu F."/>
            <person name="Zeesman S."/>
            <person name="Nowaczyk M.J."/>
            <person name="Teshima I."/>
            <person name="Chitayat D."/>
            <person name="Shuman C."/>
            <person name="Weksberg R."/>
            <person name="Zackai E.H."/>
            <person name="Grebe T.A."/>
            <person name="Cox S.R."/>
            <person name="Kirkpatrick S.J."/>
            <person name="Rahman N."/>
            <person name="Friedman J.M."/>
            <person name="Heng H.H.Q."/>
            <person name="Pelicci P.G."/>
            <person name="Lo-Coco F."/>
            <person name="Belloni E."/>
            <person name="Shaffer L.G."/>
            <person name="Pober B."/>
            <person name="Morton C.C."/>
            <person name="Gusella J.F."/>
            <person name="Bruns G.A.P."/>
            <person name="Korf B.R."/>
            <person name="Quade B.J."/>
            <person name="Ligon A.H."/>
            <person name="Ferguson H."/>
            <person name="Higgins A.W."/>
            <person name="Leach N.T."/>
            <person name="Herrick S.R."/>
            <person name="Lemyre E."/>
            <person name="Farra C.G."/>
            <person name="Kim H.-G."/>
            <person name="Summers A.M."/>
            <person name="Gripp K.W."/>
            <person name="Roberts W."/>
            <person name="Szatmari P."/>
            <person name="Winsor E.J.T."/>
            <person name="Grzeschik K.-H."/>
            <person name="Teebi A."/>
            <person name="Minassian B.A."/>
            <person name="Kere J."/>
            <person name="Armengol L."/>
            <person name="Pujana M.A."/>
            <person name="Estivill X."/>
            <person name="Wilson M.D."/>
            <person name="Koop B.F."/>
            <person name="Tosi S."/>
            <person name="Moore G.E."/>
            <person name="Boright A.P."/>
            <person name="Zlotorynski E."/>
            <person name="Kerem B."/>
            <person name="Kroisel P.M."/>
            <person name="Petek E."/>
            <person name="Oscier D.G."/>
            <person name="Mould S.J."/>
            <person name="Doehner H."/>
            <person name="Doehner K."/>
            <person name="Rommens J.M."/>
            <person name="Vincent J.B."/>
            <person name="Venter J.C."/>
            <person name="Li P.W."/>
            <person name="Mural R.J."/>
            <person name="Adams M.D."/>
            <person name="Tsui L.-C."/>
        </authorList>
    </citation>
    <scope>NUCLEOTIDE SEQUENCE [LARGE SCALE GENOMIC DNA]</scope>
</reference>
<reference key="8">
    <citation type="submission" date="2005-07" db="EMBL/GenBank/DDBJ databases">
        <authorList>
            <person name="Mural R.J."/>
            <person name="Istrail S."/>
            <person name="Sutton G.G."/>
            <person name="Florea L."/>
            <person name="Halpern A.L."/>
            <person name="Mobarry C.M."/>
            <person name="Lippert R."/>
            <person name="Walenz B."/>
            <person name="Shatkay H."/>
            <person name="Dew I."/>
            <person name="Miller J.R."/>
            <person name="Flanigan M.J."/>
            <person name="Edwards N.J."/>
            <person name="Bolanos R."/>
            <person name="Fasulo D."/>
            <person name="Halldorsson B.V."/>
            <person name="Hannenhalli S."/>
            <person name="Turner R."/>
            <person name="Yooseph S."/>
            <person name="Lu F."/>
            <person name="Nusskern D.R."/>
            <person name="Shue B.C."/>
            <person name="Zheng X.H."/>
            <person name="Zhong F."/>
            <person name="Delcher A.L."/>
            <person name="Huson D.H."/>
            <person name="Kravitz S.A."/>
            <person name="Mouchard L."/>
            <person name="Reinert K."/>
            <person name="Remington K.A."/>
            <person name="Clark A.G."/>
            <person name="Waterman M.S."/>
            <person name="Eichler E.E."/>
            <person name="Adams M.D."/>
            <person name="Hunkapiller M.W."/>
            <person name="Myers E.W."/>
            <person name="Venter J.C."/>
        </authorList>
    </citation>
    <scope>NUCLEOTIDE SEQUENCE [LARGE SCALE GENOMIC DNA]</scope>
</reference>
<reference key="9">
    <citation type="journal article" date="2004" name="Genome Res.">
        <title>The status, quality, and expansion of the NIH full-length cDNA project: the Mammalian Gene Collection (MGC).</title>
        <authorList>
            <consortium name="The MGC Project Team"/>
        </authorList>
    </citation>
    <scope>NUCLEOTIDE SEQUENCE [LARGE SCALE MRNA] (ISOFORM 1)</scope>
    <source>
        <tissue>Ovary</tissue>
    </source>
</reference>
<reference key="10">
    <citation type="journal article" date="1992" name="Proc. Natl. Acad. Sci. U.S.A.">
        <title>Characterization of the transcriptional regulatory region of the human dihydrolipoamide dehydrogenase gene.</title>
        <authorList>
            <person name="Johanning G.L."/>
            <person name="Morris J.I."/>
            <person name="Madhusudhan K.T."/>
            <person name="Samols D."/>
            <person name="Patel M.S."/>
        </authorList>
    </citation>
    <scope>NUCLEOTIDE SEQUENCE [GENOMIC DNA] OF 1-13</scope>
</reference>
<reference key="11">
    <citation type="journal article" date="2004" name="J. Biol. Chem.">
        <title>Organization of the cores of the mammalian pyruvate dehydrogenase complex formed by E2 and E2 plus the E3-binding protein and their capacities to bind the E1 and E3 components.</title>
        <authorList>
            <person name="Hiromasa Y."/>
            <person name="Fujisawa T."/>
            <person name="Aso Y."/>
            <person name="Roche T.E."/>
        </authorList>
    </citation>
    <scope>SUBUNIT</scope>
</reference>
<reference key="12">
    <citation type="journal article" date="2005" name="J. Biol. Chem.">
        <title>Novelty of the pyruvate metabolic enzyme dihydrolipoamide dehydrogenase in spermatozoa: correlation of its localization, tyrosine phosphorylation, and activity during sperm capacitation.</title>
        <authorList>
            <person name="Mitra K."/>
            <person name="Rangaraj N."/>
            <person name="Shivaji S."/>
        </authorList>
    </citation>
    <scope>SUBCELLULAR LOCATION</scope>
</reference>
<reference key="13">
    <citation type="journal article" date="2007" name="Proc. Natl. Acad. Sci. U.S.A.">
        <title>Cryptic proteolytic activity of dihydrolipoamide dehydrogenase.</title>
        <authorList>
            <person name="Babady N.E."/>
            <person name="Pang Y.P."/>
            <person name="Elpeleg O."/>
            <person name="Isaya G."/>
        </authorList>
    </citation>
    <scope>FUNCTION</scope>
    <scope>CATALYTIC ACTIVITY</scope>
    <scope>ACTIVITY REGULATION</scope>
    <scope>CHARACTERIZATION OF VARIANT DLDD ASP-479</scope>
    <scope>MUTAGENESIS OF GLU-466; HIS-485 AND SER-491</scope>
</reference>
<reference key="14">
    <citation type="journal article" date="2009" name="J. Mol. Catal., B Enzym.">
        <title>Interaction of E1 and E3 components with the core proteins of the human pyruvate dehydrogenase complex.</title>
        <authorList>
            <person name="Patel M.S."/>
            <person name="Korotchkina L.G."/>
            <person name="Sidhu S."/>
        </authorList>
    </citation>
    <scope>CATALYTIC ACTIVITY</scope>
    <scope>INTERACTION WITH PDHX</scope>
    <scope>MUTAGENESIS OF LYS-89; ARG-482; GLU-492 AND LYS-505</scope>
    <scope>CHARACTERIZATION OF VARIANTS DLDD GLU-72; LYS-375; LEU-488 AND GLY-495</scope>
</reference>
<reference key="15">
    <citation type="journal article" date="2009" name="Science">
        <title>Lysine acetylation targets protein complexes and co-regulates major cellular functions.</title>
        <authorList>
            <person name="Choudhary C."/>
            <person name="Kumar C."/>
            <person name="Gnad F."/>
            <person name="Nielsen M.L."/>
            <person name="Rehman M."/>
            <person name="Walther T.C."/>
            <person name="Olsen J.V."/>
            <person name="Mann M."/>
        </authorList>
    </citation>
    <scope>ACETYLATION [LARGE SCALE ANALYSIS] AT LYS-143; LYS-410 AND LYS-417</scope>
    <scope>IDENTIFICATION BY MASS SPECTROMETRY [LARGE SCALE ANALYSIS]</scope>
</reference>
<reference key="16">
    <citation type="journal article" date="2010" name="Biochem. Biophys. Res. Commun.">
        <title>Characterization of interactions of dihydrolipoamide dehydrogenase with its binding protein in the human pyruvate dehydrogenase complex.</title>
        <authorList>
            <person name="Park Y.H."/>
            <person name="Patel M.S."/>
        </authorList>
    </citation>
    <scope>CATALYTIC ACTIVITY</scope>
    <scope>INTERACTION WITH PDHX</scope>
    <scope>MUTAGENESIS OF HIS-383; ASP-448; TYR-473 AND ARG-482</scope>
</reference>
<reference key="17">
    <citation type="journal article" date="2011" name="BMC Syst. Biol.">
        <title>Initial characterization of the human central proteome.</title>
        <authorList>
            <person name="Burkard T.R."/>
            <person name="Planyavsky M."/>
            <person name="Kaupe I."/>
            <person name="Breitwieser F.P."/>
            <person name="Buerckstuemmer T."/>
            <person name="Bennett K.L."/>
            <person name="Superti-Furga G."/>
            <person name="Colinge J."/>
        </authorList>
    </citation>
    <scope>IDENTIFICATION BY MASS SPECTROMETRY [LARGE SCALE ANALYSIS]</scope>
</reference>
<reference key="18">
    <citation type="journal article" date="2012" name="J. Proteome Res.">
        <title>Resveratrol-induced changes of the human adipocyte secretion profile.</title>
        <authorList>
            <person name="Rosenow A."/>
            <person name="Noben J.P."/>
            <person name="Jocken J."/>
            <person name="Kallendrusch S."/>
            <person name="Fischer-Posovszky P."/>
            <person name="Mariman E.C."/>
            <person name="Renes J."/>
        </authorList>
    </citation>
    <scope>IDENTIFICATION BY MASS SPECTROMETRY [LARGE SCALE ANALYSIS]</scope>
</reference>
<reference key="19">
    <citation type="journal article" date="2013" name="J. Proteome Res.">
        <title>Toward a comprehensive characterization of a human cancer cell phosphoproteome.</title>
        <authorList>
            <person name="Zhou H."/>
            <person name="Di Palma S."/>
            <person name="Preisinger C."/>
            <person name="Peng M."/>
            <person name="Polat A.N."/>
            <person name="Heck A.J."/>
            <person name="Mohammed S."/>
        </authorList>
    </citation>
    <scope>PHOSPHORYLATION [LARGE SCALE ANALYSIS] AT SER-502</scope>
    <scope>IDENTIFICATION BY MASS SPECTROMETRY [LARGE SCALE ANALYSIS]</scope>
    <source>
        <tissue>Erythroleukemia</tissue>
    </source>
</reference>
<reference key="20">
    <citation type="journal article" date="2014" name="J. Proteomics">
        <title>An enzyme assisted RP-RPLC approach for in-depth analysis of human liver phosphoproteome.</title>
        <authorList>
            <person name="Bian Y."/>
            <person name="Song C."/>
            <person name="Cheng K."/>
            <person name="Dong M."/>
            <person name="Wang F."/>
            <person name="Huang J."/>
            <person name="Sun D."/>
            <person name="Wang L."/>
            <person name="Ye M."/>
            <person name="Zou H."/>
        </authorList>
    </citation>
    <scope>IDENTIFICATION BY MASS SPECTROMETRY [LARGE SCALE ANALYSIS]</scope>
    <source>
        <tissue>Liver</tissue>
    </source>
</reference>
<reference key="21">
    <citation type="journal article" date="2015" name="Proteomics">
        <title>N-terminome analysis of the human mitochondrial proteome.</title>
        <authorList>
            <person name="Vaca Jacome A.S."/>
            <person name="Rabilloud T."/>
            <person name="Schaeffer-Reiss C."/>
            <person name="Rompais M."/>
            <person name="Ayoub D."/>
            <person name="Lane L."/>
            <person name="Bairoch A."/>
            <person name="Van Dorsselaer A."/>
            <person name="Carapito C."/>
        </authorList>
    </citation>
    <scope>CLEAVAGE OF TRANSIT PEPTIDE [LARGE SCALE ANALYSIS] AFTER TYR-35</scope>
    <scope>IDENTIFICATION BY MASS SPECTROMETRY [LARGE SCALE ANALYSIS]</scope>
</reference>
<reference key="22">
    <citation type="journal article" date="2017" name="Nature">
        <title>KAT2A coupled with the alpha-KGDH complex acts as a histone H3 succinyltransferase.</title>
        <authorList>
            <person name="Wang Y."/>
            <person name="Guo Y.R."/>
            <person name="Liu K."/>
            <person name="Yin Z."/>
            <person name="Liu R."/>
            <person name="Xia Y."/>
            <person name="Tan L."/>
            <person name="Yang P."/>
            <person name="Lee J.H."/>
            <person name="Li X.J."/>
            <person name="Hawke D."/>
            <person name="Zheng Y."/>
            <person name="Qian X."/>
            <person name="Lyu J."/>
            <person name="He J."/>
            <person name="Xing D."/>
            <person name="Tao Y.J."/>
            <person name="Lu Z."/>
        </authorList>
    </citation>
    <scope>FUNCTION</scope>
    <scope>SUBCELLULAR LOCATION</scope>
    <scope>SUBUNIT</scope>
</reference>
<reference key="23">
    <citation type="journal article" date="2005" name="J. Mol. Biol.">
        <title>Crystal structure of human dihydrolipoamide dehydrogenase: NAD+/NADH binding and the structural basis of disease-causing mutations.</title>
        <authorList>
            <person name="Brautigam C.A."/>
            <person name="Chuang J.L."/>
            <person name="Tomchick D.R."/>
            <person name="Machius M."/>
            <person name="Chuang D.T."/>
        </authorList>
    </citation>
    <scope>X-RAY CRYSTALLOGRAPHY (2.08 ANGSTROMS) OF 36-509 IN COMPLEXES WITH NAD AND FAD</scope>
    <scope>SUBUNIT</scope>
</reference>
<reference key="24">
    <citation type="journal article" date="2006" name="J. Biol. Chem.">
        <title>How dihydrolipoamide dehydrogenase-binding protein binds dihydrolipoamide dehydrogenase in the human pyruvate dehydrogenase complex.</title>
        <authorList>
            <person name="Ciszak E.M."/>
            <person name="Makal A."/>
            <person name="Hong Y.S."/>
            <person name="Vettaikkorumakankauv A.K."/>
            <person name="Korotchkina L.G."/>
            <person name="Patel M.S."/>
        </authorList>
    </citation>
    <scope>X-RAY CRYSTALLOGRAPHY (2.59 ANGSTROMS) OF 36-509</scope>
</reference>
<reference key="25">
    <citation type="journal article" date="2006" name="Structure">
        <title>Structural insight into interactions between dihydrolipoamide dehydrogenase (E3) and E3 binding protein of human pyruvate dehydrogenase complex.</title>
        <authorList>
            <person name="Brautigam C.A."/>
            <person name="Wynn R.M."/>
            <person name="Chuang J.L."/>
            <person name="Machius M."/>
            <person name="Tomchick D.R."/>
            <person name="Chuang D.T."/>
        </authorList>
    </citation>
    <scope>X-RAY CRYSTALLOGRAPHY (2.18 ANGSTROMS) OF 36-509 IN COMPLEX WITH PDHX</scope>
    <scope>CATALYTIC ACTIVITY</scope>
    <scope>CHARACTERIZATION OF VARIANT DLDD GLY-495</scope>
</reference>
<reference key="26">
    <citation type="journal article" date="2010" name="J. Mol. Biol.">
        <title>Solution structure and characterisation of the human pyruvate dehydrogenase complex core assembly.</title>
        <authorList>
            <person name="Vijayakrishnan S."/>
            <person name="Kelly S.M."/>
            <person name="Gilbert R.J."/>
            <person name="Callow P."/>
            <person name="Bhella D."/>
            <person name="Forsyth T."/>
            <person name="Lindsay J.G."/>
            <person name="Byron O."/>
        </authorList>
    </citation>
    <scope>STRUCTURE BY ELECTRON MICROSCOPY (33.3 ANGSTROMS) OF INNER CORE OF THE COMPLEX</scope>
    <scope>SUBUNIT</scope>
</reference>
<reference key="27">
    <citation type="journal article" date="1993" name="Proc. Natl. Acad. Sci. U.S.A.">
        <title>Identification of two missense mutations in a dihydrolipoamide dehydrogenase-deficient patient.</title>
        <authorList>
            <person name="Liu T.-C."/>
            <person name="Kim H."/>
            <person name="Arizmendi C."/>
            <person name="Kitano A."/>
            <person name="Patel M.S."/>
        </authorList>
    </citation>
    <scope>VARIANTS DLDD GLU-72 AND LEU-488</scope>
</reference>
<reference key="28">
    <citation type="journal article" date="1997" name="Biochim. Biophys. Acta">
        <title>Deficiency of dihydrolipoamide dehydrogenase due to two mutant alleles (E340K and G101del). Analysis of a family and prenatal testing.</title>
        <authorList>
            <person name="Hong Y.S."/>
            <person name="Kerr D.S."/>
            <person name="Liu T.C."/>
            <person name="Lusk M."/>
            <person name="Powell B.R."/>
            <person name="Patel M.S."/>
        </authorList>
    </citation>
    <scope>VARIANTS DLDD GLY-136 DEL AND LYS-375</scope>
</reference>
<reference key="29">
    <citation type="journal article" date="1996" name="Hum. Mol. Genet.">
        <title>Identification of two mutations in a compound heterozygous child with dihydrolipoamide dehydrogenase deficiency.</title>
        <authorList>
            <person name="Hong Y.S."/>
            <person name="Kerr D.S."/>
            <person name="Craigen W.J."/>
            <person name="Tan J."/>
            <person name="Pan Y."/>
            <person name="Lusk M."/>
            <person name="Patel M.S."/>
        </authorList>
    </citation>
    <scope>VARIANT DLDD GLY-495</scope>
</reference>
<reference key="30">
    <citation type="journal article" date="1999" name="Biochem. Biophys. Res. Commun.">
        <title>Lipoamide dehydrogenase deficiency due to a novel mutation in the interface domain.</title>
        <authorList>
            <person name="Shany E."/>
            <person name="Saada A."/>
            <person name="Landau D."/>
            <person name="Shaag A."/>
            <person name="Hershkovitz E."/>
            <person name="Elpeleg O.N."/>
        </authorList>
    </citation>
    <scope>VARIANT DLDD VAL-479</scope>
</reference>
<reference key="31">
    <citation type="journal article" date="2001" name="Med. Sci. Monit.">
        <title>Novel mutations in a boy with dihydrolipoamide dehydrogenase deficiency.</title>
        <authorList>
            <person name="Cerna L."/>
            <person name="Wenchich L."/>
            <person name="Hansikova H."/>
            <person name="Kmoch S."/>
            <person name="Peskova K."/>
            <person name="Chrastina P."/>
            <person name="Brynda J."/>
            <person name="Zeman J."/>
        </authorList>
    </citation>
    <scope>VARIANTS DLDD VAL-361 AND LYS-375</scope>
</reference>
<reference key="32">
    <citation type="journal article" date="2003" name="Eur. J. Pediatr.">
        <title>Leigh syndrome due to compound heterozygosity of dihydrolipoamide dehydrogenase gene mutations. Description of the first E3 splice site mutation.</title>
        <authorList>
            <person name="Grafakou O."/>
            <person name="Oexle K."/>
            <person name="van den Heuvel L."/>
            <person name="Smeets R."/>
            <person name="Trijbels F."/>
            <person name="Goebel H.H."/>
            <person name="Bosshard N."/>
            <person name="Superti-Furga A."/>
            <person name="Steinmann B."/>
            <person name="Smeitink J."/>
        </authorList>
    </citation>
    <scope>VARIANT DLDD THR-393</scope>
</reference>
<reference key="33">
    <citation type="journal article" date="2005" name="Hum. Mutat.">
        <title>A novel mutation in the dihydrolipoamide dehydrogenase E3 subunit gene (DLD) resulting in an atypical form of alpha-ketoglutarate dehydrogenase deficiency.</title>
        <authorList>
            <person name="Odievre M.H."/>
            <person name="Chretien D."/>
            <person name="Munnich A."/>
            <person name="Robinson B.H."/>
            <person name="Dumoulin R."/>
            <person name="Masmoudi S."/>
            <person name="Kadhom N."/>
            <person name="Roetig A."/>
            <person name="Rustin P."/>
            <person name="Bonnefont J.P."/>
        </authorList>
    </citation>
    <scope>VARIANT DLDD GLY-482</scope>
    <scope>CHARACTERIZATION OF VARIANT DLDD GLY-482</scope>
    <scope>CATALYTIC ACTIVITY</scope>
</reference>
<reference key="34">
    <citation type="journal article" date="2006" name="Am. J. Med. Genet. A">
        <title>Novel mutations in dihydrolipoamide dehydrogenase deficiency in two cousins with borderline-normal PDH complex activity.</title>
        <authorList>
            <person name="Cameron J.M."/>
            <person name="Levandovskiy V."/>
            <person name="Mackay N."/>
            <person name="Raiman J."/>
            <person name="Renaud D.L."/>
            <person name="Clarke J.T."/>
            <person name="Feigenbaum A."/>
            <person name="Elpeleg O."/>
            <person name="Robinson B.H."/>
        </authorList>
    </citation>
    <scope>VARIANTS DLDD THR-47; CYS-229 AND LYS-375</scope>
    <scope>CATALYTIC ACTIVITY</scope>
</reference>
<reference key="35">
    <citation type="journal article" date="1999" name="Am. J. Med. Genet.">
        <title>Molecular basis of lipoamide dehydrogenase deficiency in Ashkenazi Jews.</title>
        <authorList>
            <person name="Shaag A."/>
            <person name="Saada A."/>
            <person name="Berger I."/>
            <person name="Mandel H."/>
            <person name="Joseph A."/>
            <person name="Feigenbaum A."/>
            <person name="Elpeleg O.N."/>
        </authorList>
    </citation>
    <scope>VARIANT DLDD CYS-229</scope>
</reference>
<keyword id="KW-0002">3D-structure</keyword>
<keyword id="KW-0007">Acetylation</keyword>
<keyword id="KW-0025">Alternative splicing</keyword>
<keyword id="KW-0966">Cell projection</keyword>
<keyword id="KW-0969">Cilium</keyword>
<keyword id="KW-0968">Cytoplasmic vesicle</keyword>
<keyword id="KW-0225">Disease variant</keyword>
<keyword id="KW-1015">Disulfide bond</keyword>
<keyword id="KW-0274">FAD</keyword>
<keyword id="KW-0282">Flagellum</keyword>
<keyword id="KW-0285">Flavoprotein</keyword>
<keyword id="KW-0496">Mitochondrion</keyword>
<keyword id="KW-0520">NAD</keyword>
<keyword id="KW-0539">Nucleus</keyword>
<keyword id="KW-0560">Oxidoreductase</keyword>
<keyword id="KW-0597">Phosphoprotein</keyword>
<keyword id="KW-1267">Proteomics identification</keyword>
<keyword id="KW-0676">Redox-active center</keyword>
<keyword id="KW-1185">Reference proteome</keyword>
<keyword id="KW-0809">Transit peptide</keyword>
<name>DLDH_HUMAN</name>
<dbReference type="EC" id="1.8.1.4" evidence="9 12 13 14 15 17"/>
<dbReference type="EMBL" id="J03490">
    <property type="protein sequence ID" value="AAA59527.1"/>
    <property type="molecule type" value="mRNA"/>
</dbReference>
<dbReference type="EMBL" id="J03620">
    <property type="protein sequence ID" value="AAA35764.1"/>
    <property type="molecule type" value="mRNA"/>
</dbReference>
<dbReference type="EMBL" id="L13761">
    <property type="protein sequence ID" value="AAB01381.1"/>
    <property type="molecule type" value="Genomic_DNA"/>
</dbReference>
<dbReference type="EMBL" id="L13749">
    <property type="protein sequence ID" value="AAB01381.1"/>
    <property type="status" value="JOINED"/>
    <property type="molecule type" value="Genomic_DNA"/>
</dbReference>
<dbReference type="EMBL" id="L13750">
    <property type="protein sequence ID" value="AAB01381.1"/>
    <property type="status" value="JOINED"/>
    <property type="molecule type" value="Genomic_DNA"/>
</dbReference>
<dbReference type="EMBL" id="L13751">
    <property type="protein sequence ID" value="AAB01381.1"/>
    <property type="status" value="JOINED"/>
    <property type="molecule type" value="Genomic_DNA"/>
</dbReference>
<dbReference type="EMBL" id="L13752">
    <property type="protein sequence ID" value="AAB01381.1"/>
    <property type="status" value="JOINED"/>
    <property type="molecule type" value="Genomic_DNA"/>
</dbReference>
<dbReference type="EMBL" id="L13753">
    <property type="protein sequence ID" value="AAB01381.1"/>
    <property type="status" value="JOINED"/>
    <property type="molecule type" value="Genomic_DNA"/>
</dbReference>
<dbReference type="EMBL" id="L13754">
    <property type="protein sequence ID" value="AAB01381.1"/>
    <property type="status" value="JOINED"/>
    <property type="molecule type" value="Genomic_DNA"/>
</dbReference>
<dbReference type="EMBL" id="L13748">
    <property type="protein sequence ID" value="AAB01381.1"/>
    <property type="status" value="JOINED"/>
    <property type="molecule type" value="Genomic_DNA"/>
</dbReference>
<dbReference type="EMBL" id="L13755">
    <property type="protein sequence ID" value="AAB01381.1"/>
    <property type="status" value="JOINED"/>
    <property type="molecule type" value="Genomic_DNA"/>
</dbReference>
<dbReference type="EMBL" id="L13759">
    <property type="protein sequence ID" value="AAB01381.1"/>
    <property type="status" value="JOINED"/>
    <property type="molecule type" value="Genomic_DNA"/>
</dbReference>
<dbReference type="EMBL" id="L13760">
    <property type="protein sequence ID" value="AAB01381.1"/>
    <property type="status" value="JOINED"/>
    <property type="molecule type" value="Genomic_DNA"/>
</dbReference>
<dbReference type="EMBL" id="L13756">
    <property type="protein sequence ID" value="AAB01381.1"/>
    <property type="status" value="JOINED"/>
    <property type="molecule type" value="Genomic_DNA"/>
</dbReference>
<dbReference type="EMBL" id="L13757">
    <property type="protein sequence ID" value="AAB01381.1"/>
    <property type="status" value="JOINED"/>
    <property type="molecule type" value="Genomic_DNA"/>
</dbReference>
<dbReference type="EMBL" id="L13758">
    <property type="protein sequence ID" value="AAB01381.1"/>
    <property type="status" value="JOINED"/>
    <property type="molecule type" value="Genomic_DNA"/>
</dbReference>
<dbReference type="EMBL" id="AK295080">
    <property type="protein sequence ID" value="BAG58122.1"/>
    <property type="molecule type" value="mRNA"/>
</dbReference>
<dbReference type="EMBL" id="AK300077">
    <property type="protein sequence ID" value="BAG61881.1"/>
    <property type="molecule type" value="mRNA"/>
</dbReference>
<dbReference type="EMBL" id="AK312346">
    <property type="protein sequence ID" value="BAG35267.1"/>
    <property type="molecule type" value="mRNA"/>
</dbReference>
<dbReference type="EMBL" id="AB209703">
    <property type="protein sequence ID" value="BAD92940.1"/>
    <property type="status" value="ALT_INIT"/>
    <property type="molecule type" value="mRNA"/>
</dbReference>
<dbReference type="EMBL" id="AC005046">
    <property type="status" value="NOT_ANNOTATED_CDS"/>
    <property type="molecule type" value="Genomic_DNA"/>
</dbReference>
<dbReference type="EMBL" id="CH236947">
    <property type="protein sequence ID" value="EAL24389.1"/>
    <property type="molecule type" value="Genomic_DNA"/>
</dbReference>
<dbReference type="EMBL" id="CH471070">
    <property type="protein sequence ID" value="EAW83421.1"/>
    <property type="molecule type" value="Genomic_DNA"/>
</dbReference>
<dbReference type="EMBL" id="BC018648">
    <property type="protein sequence ID" value="AAH18648.1"/>
    <property type="molecule type" value="mRNA"/>
</dbReference>
<dbReference type="EMBL" id="BC018696">
    <property type="protein sequence ID" value="AAH18696.1"/>
    <property type="molecule type" value="mRNA"/>
</dbReference>
<dbReference type="EMBL" id="M99384">
    <property type="protein sequence ID" value="AAA35759.1"/>
    <property type="molecule type" value="Genomic_DNA"/>
</dbReference>
<dbReference type="CCDS" id="CCDS5749.1">
    <molecule id="P09622-1"/>
</dbReference>
<dbReference type="CCDS" id="CCDS78268.1">
    <molecule id="P09622-3"/>
</dbReference>
<dbReference type="PIR" id="A92622">
    <property type="entry name" value="DEHULP"/>
</dbReference>
<dbReference type="RefSeq" id="NP_000099.2">
    <molecule id="P09622-1"/>
    <property type="nucleotide sequence ID" value="NM_000108.5"/>
</dbReference>
<dbReference type="RefSeq" id="NP_001276679.1">
    <molecule id="P09622-2"/>
    <property type="nucleotide sequence ID" value="NM_001289750.1"/>
</dbReference>
<dbReference type="RefSeq" id="NP_001276680.1">
    <property type="nucleotide sequence ID" value="NM_001289751.1"/>
</dbReference>
<dbReference type="RefSeq" id="NP_001276681.1">
    <molecule id="P09622-3"/>
    <property type="nucleotide sequence ID" value="NM_001289752.1"/>
</dbReference>
<dbReference type="PDB" id="1ZMC">
    <property type="method" value="X-ray"/>
    <property type="resolution" value="2.53 A"/>
    <property type="chains" value="A/B/C/D/E/F/G/H=36-509"/>
</dbReference>
<dbReference type="PDB" id="1ZMD">
    <property type="method" value="X-ray"/>
    <property type="resolution" value="2.08 A"/>
    <property type="chains" value="A/B/C/D/E/F/G/H=36-509"/>
</dbReference>
<dbReference type="PDB" id="1ZY8">
    <property type="method" value="X-ray"/>
    <property type="resolution" value="2.59 A"/>
    <property type="chains" value="A/B/C/D/E/F/G/H/I/J=36-509"/>
</dbReference>
<dbReference type="PDB" id="2F5Z">
    <property type="method" value="X-ray"/>
    <property type="resolution" value="2.18 A"/>
    <property type="chains" value="A/B/C/D/E/F/G/H/I/J=36-509"/>
</dbReference>
<dbReference type="PDB" id="3RNM">
    <property type="method" value="X-ray"/>
    <property type="resolution" value="2.40 A"/>
    <property type="chains" value="A/B/C/D=36-509"/>
</dbReference>
<dbReference type="PDB" id="5J5Z">
    <property type="method" value="X-ray"/>
    <property type="resolution" value="1.84 A"/>
    <property type="chains" value="A/B=36-509"/>
</dbReference>
<dbReference type="PDB" id="5NHG">
    <property type="method" value="X-ray"/>
    <property type="resolution" value="2.27 A"/>
    <property type="chains" value="A/B/C/D/E/F/G/H=36-509"/>
</dbReference>
<dbReference type="PDB" id="6HG8">
    <property type="method" value="X-ray"/>
    <property type="resolution" value="1.76 A"/>
    <property type="chains" value="A/B=36-509"/>
</dbReference>
<dbReference type="PDB" id="6I4P">
    <property type="method" value="X-ray"/>
    <property type="resolution" value="1.60 A"/>
    <property type="chains" value="A/B=36-509"/>
</dbReference>
<dbReference type="PDB" id="6I4Q">
    <property type="method" value="X-ray"/>
    <property type="resolution" value="1.75 A"/>
    <property type="chains" value="A/B=36-509"/>
</dbReference>
<dbReference type="PDB" id="6I4R">
    <property type="method" value="X-ray"/>
    <property type="resolution" value="1.44 A"/>
    <property type="chains" value="A/B=36-509"/>
</dbReference>
<dbReference type="PDB" id="6I4S">
    <property type="method" value="X-ray"/>
    <property type="resolution" value="1.75 A"/>
    <property type="chains" value="A/B=36-509"/>
</dbReference>
<dbReference type="PDB" id="6I4T">
    <property type="method" value="X-ray"/>
    <property type="resolution" value="1.82 A"/>
    <property type="chains" value="A/B=36-509"/>
</dbReference>
<dbReference type="PDB" id="6I4U">
    <property type="method" value="X-ray"/>
    <property type="resolution" value="1.84 A"/>
    <property type="chains" value="A/B=36-509"/>
</dbReference>
<dbReference type="PDB" id="6I4Z">
    <property type="method" value="X-ray"/>
    <property type="resolution" value="2.34 A"/>
    <property type="chains" value="A/B/C/D/E/F/G/H=36-509"/>
</dbReference>
<dbReference type="PDB" id="7PSC">
    <property type="method" value="X-ray"/>
    <property type="resolution" value="2.44 A"/>
    <property type="chains" value="A/B=36-509"/>
</dbReference>
<dbReference type="PDB" id="7ZYT">
    <property type="method" value="X-ray"/>
    <property type="resolution" value="2.89 A"/>
    <property type="chains" value="A/B=36-509"/>
</dbReference>
<dbReference type="PDBsum" id="1ZMC"/>
<dbReference type="PDBsum" id="1ZMD"/>
<dbReference type="PDBsum" id="1ZY8"/>
<dbReference type="PDBsum" id="2F5Z"/>
<dbReference type="PDBsum" id="3RNM"/>
<dbReference type="PDBsum" id="5J5Z"/>
<dbReference type="PDBsum" id="5NHG"/>
<dbReference type="PDBsum" id="6HG8"/>
<dbReference type="PDBsum" id="6I4P"/>
<dbReference type="PDBsum" id="6I4Q"/>
<dbReference type="PDBsum" id="6I4R"/>
<dbReference type="PDBsum" id="6I4S"/>
<dbReference type="PDBsum" id="6I4T"/>
<dbReference type="PDBsum" id="6I4U"/>
<dbReference type="PDBsum" id="6I4Z"/>
<dbReference type="PDBsum" id="7PSC"/>
<dbReference type="PDBsum" id="7ZYT"/>
<dbReference type="SMR" id="P09622"/>
<dbReference type="BioGRID" id="108082">
    <property type="interactions" value="497"/>
</dbReference>
<dbReference type="ComplexPortal" id="CPX-2216">
    <property type="entry name" value="Mitochondrial 2-oxoisovalerate dehydrogenase complex"/>
</dbReference>
<dbReference type="ComplexPortal" id="CPX-6233">
    <property type="entry name" value="Mitochondrial pyruvate dehydrogenase complex, somatic variant"/>
</dbReference>
<dbReference type="ComplexPortal" id="CPX-6242">
    <property type="entry name" value="Mitochondrial pyruvate dehydrogenase complex, testis-specific variant"/>
</dbReference>
<dbReference type="ComplexPortal" id="CPX-9061">
    <property type="entry name" value="Mitochondrial 2-oxoglutarate dehydrogenase complex"/>
</dbReference>
<dbReference type="CORUM" id="P09622"/>
<dbReference type="DIP" id="DIP-29027N"/>
<dbReference type="FunCoup" id="P09622">
    <property type="interactions" value="1584"/>
</dbReference>
<dbReference type="IntAct" id="P09622">
    <property type="interactions" value="381"/>
</dbReference>
<dbReference type="MINT" id="P09622"/>
<dbReference type="STRING" id="9606.ENSP00000205402"/>
<dbReference type="DrugBank" id="DB03147">
    <property type="generic name" value="Flavin adenine dinucleotide"/>
</dbReference>
<dbReference type="DrugBank" id="DB00145">
    <property type="generic name" value="Glycine"/>
</dbReference>
<dbReference type="DrugBank" id="DB00157">
    <property type="generic name" value="NADH"/>
</dbReference>
<dbReference type="GlyGen" id="P09622">
    <property type="glycosylation" value="2 sites, 1 N-linked glycan (1 site), 1 O-linked glycan (1 site)"/>
</dbReference>
<dbReference type="iPTMnet" id="P09622"/>
<dbReference type="PhosphoSitePlus" id="P09622"/>
<dbReference type="SwissPalm" id="P09622"/>
<dbReference type="BioMuta" id="DLD"/>
<dbReference type="DMDM" id="269849557"/>
<dbReference type="REPRODUCTION-2DPAGE" id="IPI00015911"/>
<dbReference type="CPTAC" id="CPTAC-2727"/>
<dbReference type="jPOST" id="P09622"/>
<dbReference type="MassIVE" id="P09622"/>
<dbReference type="PaxDb" id="9606-ENSP00000205402"/>
<dbReference type="PeptideAtlas" id="P09622"/>
<dbReference type="PRIDE" id="P09622"/>
<dbReference type="ProteomicsDB" id="4221"/>
<dbReference type="ProteomicsDB" id="5080"/>
<dbReference type="ProteomicsDB" id="52254">
    <molecule id="P09622-1"/>
</dbReference>
<dbReference type="Pumba" id="P09622"/>
<dbReference type="Antibodypedia" id="17237">
    <property type="antibodies" value="533 antibodies from 36 providers"/>
</dbReference>
<dbReference type="DNASU" id="1738"/>
<dbReference type="Ensembl" id="ENST00000205402.10">
    <molecule id="P09622-1"/>
    <property type="protein sequence ID" value="ENSP00000205402.3"/>
    <property type="gene ID" value="ENSG00000091140.15"/>
</dbReference>
<dbReference type="Ensembl" id="ENST00000417551.5">
    <molecule id="P09622-1"/>
    <property type="protein sequence ID" value="ENSP00000390667.1"/>
    <property type="gene ID" value="ENSG00000091140.15"/>
</dbReference>
<dbReference type="Ensembl" id="ENST00000437604.6">
    <molecule id="P09622-3"/>
    <property type="protein sequence ID" value="ENSP00000387542.2"/>
    <property type="gene ID" value="ENSG00000091140.15"/>
</dbReference>
<dbReference type="GeneID" id="1738"/>
<dbReference type="KEGG" id="hsa:1738"/>
<dbReference type="MANE-Select" id="ENST00000205402.10">
    <property type="protein sequence ID" value="ENSP00000205402.3"/>
    <property type="RefSeq nucleotide sequence ID" value="NM_000108.5"/>
    <property type="RefSeq protein sequence ID" value="NP_000099.2"/>
</dbReference>
<dbReference type="UCSC" id="uc003vet.5">
    <molecule id="P09622-1"/>
    <property type="organism name" value="human"/>
</dbReference>
<dbReference type="AGR" id="HGNC:2898"/>
<dbReference type="CTD" id="1738"/>
<dbReference type="DisGeNET" id="1738"/>
<dbReference type="GeneCards" id="DLD"/>
<dbReference type="GeneReviews" id="DLD"/>
<dbReference type="HGNC" id="HGNC:2898">
    <property type="gene designation" value="DLD"/>
</dbReference>
<dbReference type="HPA" id="ENSG00000091140">
    <property type="expression patterns" value="Tissue enhanced (skeletal muscle, tongue)"/>
</dbReference>
<dbReference type="MalaCards" id="DLD"/>
<dbReference type="MIM" id="238331">
    <property type="type" value="gene"/>
</dbReference>
<dbReference type="MIM" id="246900">
    <property type="type" value="phenotype"/>
</dbReference>
<dbReference type="neXtProt" id="NX_P09622"/>
<dbReference type="OpenTargets" id="ENSG00000091140"/>
<dbReference type="Orphanet" id="2394">
    <property type="disease" value="Pyruvate dehydrogenase E3 deficiency"/>
</dbReference>
<dbReference type="PharmGKB" id="PA27352"/>
<dbReference type="VEuPathDB" id="HostDB:ENSG00000091140"/>
<dbReference type="eggNOG" id="KOG1335">
    <property type="taxonomic scope" value="Eukaryota"/>
</dbReference>
<dbReference type="GeneTree" id="ENSGT00550000074844"/>
<dbReference type="HOGENOM" id="CLU_016755_0_1_1"/>
<dbReference type="InParanoid" id="P09622"/>
<dbReference type="OMA" id="CAQLGMK"/>
<dbReference type="OrthoDB" id="361797at2759"/>
<dbReference type="PAN-GO" id="P09622">
    <property type="GO annotations" value="4 GO annotations based on evolutionary models"/>
</dbReference>
<dbReference type="PhylomeDB" id="P09622"/>
<dbReference type="TreeFam" id="TF300414"/>
<dbReference type="BioCyc" id="MetaCyc:HS01727-MONOMER"/>
<dbReference type="BRENDA" id="1.2.1.104">
    <property type="organism ID" value="2681"/>
</dbReference>
<dbReference type="BRENDA" id="1.2.1.105">
    <property type="organism ID" value="2681"/>
</dbReference>
<dbReference type="BRENDA" id="1.4.1.27">
    <property type="organism ID" value="2681"/>
</dbReference>
<dbReference type="BRENDA" id="1.8.1.4">
    <property type="organism ID" value="2681"/>
</dbReference>
<dbReference type="PathwayCommons" id="P09622"/>
<dbReference type="Reactome" id="R-HSA-204174">
    <property type="pathway name" value="Regulation of pyruvate dehydrogenase (PDH) complex"/>
</dbReference>
<dbReference type="Reactome" id="R-HSA-5362517">
    <property type="pathway name" value="Signaling by Retinoic Acid"/>
</dbReference>
<dbReference type="Reactome" id="R-HSA-6783984">
    <property type="pathway name" value="Glycine degradation"/>
</dbReference>
<dbReference type="Reactome" id="R-HSA-70895">
    <property type="pathway name" value="Branched-chain amino acid catabolism"/>
</dbReference>
<dbReference type="Reactome" id="R-HSA-9837999">
    <property type="pathway name" value="Mitochondrial protein degradation"/>
</dbReference>
<dbReference type="Reactome" id="R-HSA-9853506">
    <property type="pathway name" value="OGDH complex synthesizes succinyl-CoA from 2-OG"/>
</dbReference>
<dbReference type="Reactome" id="R-HSA-9858328">
    <property type="pathway name" value="OADH complex synthesizes glutaryl-CoA from 2-OA"/>
</dbReference>
<dbReference type="Reactome" id="R-HSA-9859138">
    <property type="pathway name" value="BCKDH synthesizes BCAA-CoA from KIC, KMVA, KIV"/>
</dbReference>
<dbReference type="Reactome" id="R-HSA-9861559">
    <property type="pathway name" value="PDH complex synthesizes acetyl-CoA from PYR"/>
</dbReference>
<dbReference type="Reactome" id="R-HSA-9865113">
    <property type="pathway name" value="Loss-of-function mutations in DBT cause MSUD2"/>
</dbReference>
<dbReference type="Reactome" id="R-HSA-9907570">
    <property type="pathway name" value="Loss-of-function mutations in DLD cause MSUD3/DLDD"/>
</dbReference>
<dbReference type="Reactome" id="R-HSA-9912481">
    <property type="pathway name" value="Branched-chain ketoacid dehydrogenase kinase deficiency"/>
</dbReference>
<dbReference type="Reactome" id="R-HSA-9912529">
    <property type="pathway name" value="H139Hfs13* PPM1K causes a mild variant of MSUD"/>
</dbReference>
<dbReference type="SABIO-RK" id="P09622"/>
<dbReference type="SignaLink" id="P09622"/>
<dbReference type="SIGNOR" id="P09622"/>
<dbReference type="BioGRID-ORCS" id="1738">
    <property type="hits" value="226 hits in 1169 CRISPR screens"/>
</dbReference>
<dbReference type="CD-CODE" id="91857CE7">
    <property type="entry name" value="Nucleolus"/>
</dbReference>
<dbReference type="CD-CODE" id="FB4E32DD">
    <property type="entry name" value="Presynaptic clusters and postsynaptic densities"/>
</dbReference>
<dbReference type="ChiTaRS" id="DLD">
    <property type="organism name" value="human"/>
</dbReference>
<dbReference type="EvolutionaryTrace" id="P09622"/>
<dbReference type="GeneWiki" id="Dihydrolipoamide_dehydrogenase"/>
<dbReference type="GenomeRNAi" id="1738"/>
<dbReference type="Pharos" id="P09622">
    <property type="development level" value="Tbio"/>
</dbReference>
<dbReference type="PRO" id="PR:P09622"/>
<dbReference type="Proteomes" id="UP000005640">
    <property type="component" value="Chromosome 7"/>
</dbReference>
<dbReference type="RNAct" id="P09622">
    <property type="molecule type" value="protein"/>
</dbReference>
<dbReference type="Bgee" id="ENSG00000091140">
    <property type="expression patterns" value="Expressed in heart right ventricle and 215 other cell types or tissues"/>
</dbReference>
<dbReference type="ExpressionAtlas" id="P09622">
    <property type="expression patterns" value="baseline and differential"/>
</dbReference>
<dbReference type="GO" id="GO:1902493">
    <property type="term" value="C:acetyltransferase complex"/>
    <property type="evidence" value="ECO:0007669"/>
    <property type="project" value="Ensembl"/>
</dbReference>
<dbReference type="GO" id="GO:0043159">
    <property type="term" value="C:acrosomal matrix"/>
    <property type="evidence" value="ECO:0007669"/>
    <property type="project" value="Ensembl"/>
</dbReference>
<dbReference type="GO" id="GO:0160157">
    <property type="term" value="C:branched-chain alpha-ketoacid dehydrogenase complex"/>
    <property type="evidence" value="ECO:0000314"/>
    <property type="project" value="FlyBase"/>
</dbReference>
<dbReference type="GO" id="GO:0005759">
    <property type="term" value="C:mitochondrial matrix"/>
    <property type="evidence" value="ECO:0000304"/>
    <property type="project" value="Reactome"/>
</dbReference>
<dbReference type="GO" id="GO:0005739">
    <property type="term" value="C:mitochondrion"/>
    <property type="evidence" value="ECO:0000314"/>
    <property type="project" value="UniProtKB"/>
</dbReference>
<dbReference type="GO" id="GO:0031514">
    <property type="term" value="C:motile cilium"/>
    <property type="evidence" value="ECO:0007669"/>
    <property type="project" value="UniProtKB-SubCell"/>
</dbReference>
<dbReference type="GO" id="GO:0005634">
    <property type="term" value="C:nucleus"/>
    <property type="evidence" value="ECO:0000314"/>
    <property type="project" value="UniProtKB"/>
</dbReference>
<dbReference type="GO" id="GO:0160167">
    <property type="term" value="C:oxoadipate dehydrogenase complex"/>
    <property type="evidence" value="ECO:0000314"/>
    <property type="project" value="FlyBase"/>
</dbReference>
<dbReference type="GO" id="GO:0045252">
    <property type="term" value="C:oxoglutarate dehydrogenase complex"/>
    <property type="evidence" value="ECO:0000314"/>
    <property type="project" value="UniProtKB"/>
</dbReference>
<dbReference type="GO" id="GO:0045254">
    <property type="term" value="C:pyruvate dehydrogenase complex"/>
    <property type="evidence" value="ECO:0000314"/>
    <property type="project" value="MGI"/>
</dbReference>
<dbReference type="GO" id="GO:0004148">
    <property type="term" value="F:dihydrolipoyl dehydrogenase (NADH) activity"/>
    <property type="evidence" value="ECO:0000314"/>
    <property type="project" value="UniProtKB"/>
</dbReference>
<dbReference type="GO" id="GO:0050660">
    <property type="term" value="F:flavin adenine dinucleotide binding"/>
    <property type="evidence" value="ECO:0000318"/>
    <property type="project" value="GO_Central"/>
</dbReference>
<dbReference type="GO" id="GO:0006103">
    <property type="term" value="P:2-oxoglutarate metabolic process"/>
    <property type="evidence" value="ECO:0000318"/>
    <property type="project" value="GO_Central"/>
</dbReference>
<dbReference type="GO" id="GO:0009083">
    <property type="term" value="P:branched-chain amino acid catabolic process"/>
    <property type="evidence" value="ECO:0000314"/>
    <property type="project" value="ComplexPortal"/>
</dbReference>
<dbReference type="GO" id="GO:0007369">
    <property type="term" value="P:gastrulation"/>
    <property type="evidence" value="ECO:0007669"/>
    <property type="project" value="Ensembl"/>
</dbReference>
<dbReference type="GO" id="GO:0006120">
    <property type="term" value="P:mitochondrial electron transport, NADH to ubiquinone"/>
    <property type="evidence" value="ECO:0007669"/>
    <property type="project" value="Ensembl"/>
</dbReference>
<dbReference type="GO" id="GO:0006508">
    <property type="term" value="P:proteolysis"/>
    <property type="evidence" value="ECO:0007669"/>
    <property type="project" value="Ensembl"/>
</dbReference>
<dbReference type="GO" id="GO:0006086">
    <property type="term" value="P:pyruvate decarboxylation to acetyl-CoA"/>
    <property type="evidence" value="ECO:0000314"/>
    <property type="project" value="ComplexPortal"/>
</dbReference>
<dbReference type="GO" id="GO:0006090">
    <property type="term" value="P:pyruvate metabolic process"/>
    <property type="evidence" value="ECO:0000318"/>
    <property type="project" value="GO_Central"/>
</dbReference>
<dbReference type="GO" id="GO:0042391">
    <property type="term" value="P:regulation of membrane potential"/>
    <property type="evidence" value="ECO:0007669"/>
    <property type="project" value="Ensembl"/>
</dbReference>
<dbReference type="GO" id="GO:0048240">
    <property type="term" value="P:sperm capacitation"/>
    <property type="evidence" value="ECO:0007669"/>
    <property type="project" value="Ensembl"/>
</dbReference>
<dbReference type="FunFam" id="3.30.390.30:FF:000001">
    <property type="entry name" value="Dihydrolipoyl dehydrogenase"/>
    <property type="match status" value="1"/>
</dbReference>
<dbReference type="FunFam" id="3.50.50.60:FF:000025">
    <property type="entry name" value="Dihydrolipoyl dehydrogenase"/>
    <property type="match status" value="1"/>
</dbReference>
<dbReference type="FunFam" id="3.50.50.60:FF:000221">
    <property type="entry name" value="Dihydrolipoyl dehydrogenase, mitochondrial"/>
    <property type="match status" value="1"/>
</dbReference>
<dbReference type="Gene3D" id="3.30.390.30">
    <property type="match status" value="1"/>
</dbReference>
<dbReference type="Gene3D" id="3.50.50.60">
    <property type="entry name" value="FAD/NAD(P)-binding domain"/>
    <property type="match status" value="2"/>
</dbReference>
<dbReference type="InterPro" id="IPR050151">
    <property type="entry name" value="Class-I_Pyr_Nuc-Dis_Oxidored"/>
</dbReference>
<dbReference type="InterPro" id="IPR036188">
    <property type="entry name" value="FAD/NAD-bd_sf"/>
</dbReference>
<dbReference type="InterPro" id="IPR023753">
    <property type="entry name" value="FAD/NAD-binding_dom"/>
</dbReference>
<dbReference type="InterPro" id="IPR016156">
    <property type="entry name" value="FAD/NAD-linked_Rdtase_dimer_sf"/>
</dbReference>
<dbReference type="InterPro" id="IPR006258">
    <property type="entry name" value="Lipoamide_DH"/>
</dbReference>
<dbReference type="InterPro" id="IPR001100">
    <property type="entry name" value="Pyr_nuc-diS_OxRdtase"/>
</dbReference>
<dbReference type="InterPro" id="IPR004099">
    <property type="entry name" value="Pyr_nucl-diS_OxRdtase_dimer"/>
</dbReference>
<dbReference type="InterPro" id="IPR012999">
    <property type="entry name" value="Pyr_OxRdtase_I_AS"/>
</dbReference>
<dbReference type="NCBIfam" id="TIGR01350">
    <property type="entry name" value="lipoamide_DH"/>
    <property type="match status" value="1"/>
</dbReference>
<dbReference type="PANTHER" id="PTHR22912:SF151">
    <property type="entry name" value="DIHYDROLIPOYL DEHYDROGENASE, MITOCHONDRIAL"/>
    <property type="match status" value="1"/>
</dbReference>
<dbReference type="PANTHER" id="PTHR22912">
    <property type="entry name" value="DISULFIDE OXIDOREDUCTASE"/>
    <property type="match status" value="1"/>
</dbReference>
<dbReference type="Pfam" id="PF07992">
    <property type="entry name" value="Pyr_redox_2"/>
    <property type="match status" value="1"/>
</dbReference>
<dbReference type="Pfam" id="PF02852">
    <property type="entry name" value="Pyr_redox_dim"/>
    <property type="match status" value="1"/>
</dbReference>
<dbReference type="PIRSF" id="PIRSF000350">
    <property type="entry name" value="Mercury_reductase_MerA"/>
    <property type="match status" value="1"/>
</dbReference>
<dbReference type="PRINTS" id="PR00368">
    <property type="entry name" value="FADPNR"/>
</dbReference>
<dbReference type="PRINTS" id="PR00411">
    <property type="entry name" value="PNDRDTASEI"/>
</dbReference>
<dbReference type="SUPFAM" id="SSF51905">
    <property type="entry name" value="FAD/NAD(P)-binding domain"/>
    <property type="match status" value="1"/>
</dbReference>
<dbReference type="SUPFAM" id="SSF55424">
    <property type="entry name" value="FAD/NAD-linked reductases, dimerisation (C-terminal) domain"/>
    <property type="match status" value="1"/>
</dbReference>
<dbReference type="PROSITE" id="PS00076">
    <property type="entry name" value="PYRIDINE_REDOX_1"/>
    <property type="match status" value="1"/>
</dbReference>
<sequence>MQSWSRVYCSLAKRGHFNRISHGLQGLSAVPLRTYADQPIDADVTVIGSGPGGYVAAIKAAQLGFKTVCIEKNETLGGTCLNVGCIPSKALLNNSHYYHMAHGKDFASRGIEMSEVRLNLDKMMEQKSTAVKALTGGIAHLFKQNKVVHVNGYGKITGKNQVTATKADGGTQVIDTKNILIATGSEVTPFPGITIDEDTIVSSTGALSLKKVPEKMVVIGAGVIGVELGSVWQRLGADVTAVEFLGHVGGVGIDMEISKNFQRILQKQGFKFKLNTKVTGATKKSDGKIDVSIEAASGGKAEVITCDVLLVCIGRRPFTKNLGLEELGIELDPRGRIPVNTRFQTKIPNIYAIGDVVAGPMLAHKAEDEGIICVEGMAGGAVHIDYNCVPSVIYTHPEVAWVGKSEEQLKEEGIEYKVGKFPFAANSRAKTNADTDGMVKILGQKSTDRVLGAHILGPGAGEMVNEAALALEYGASCEDIARVCHAHPTLSEAFREANLAASFGKSINF</sequence>